<keyword id="KW-0326">Glycosidase</keyword>
<keyword id="KW-0378">Hydrolase</keyword>
<keyword id="KW-1185">Reference proteome</keyword>
<comment type="catalytic activity">
    <reaction>
        <text>alpha,alpha-trehalose + H2O = alpha-D-glucose + beta-D-glucose</text>
        <dbReference type="Rhea" id="RHEA:32675"/>
        <dbReference type="ChEBI" id="CHEBI:15377"/>
        <dbReference type="ChEBI" id="CHEBI:15903"/>
        <dbReference type="ChEBI" id="CHEBI:16551"/>
        <dbReference type="ChEBI" id="CHEBI:17925"/>
        <dbReference type="EC" id="3.2.1.28"/>
    </reaction>
</comment>
<comment type="similarity">
    <text evidence="3">Belongs to the glycosyl hydrolase 37 family.</text>
</comment>
<organism>
    <name type="scientific">Eremothecium gossypii (strain ATCC 10895 / CBS 109.51 / FGSC 9923 / NRRL Y-1056)</name>
    <name type="common">Yeast</name>
    <name type="synonym">Ashbya gossypii</name>
    <dbReference type="NCBI Taxonomy" id="284811"/>
    <lineage>
        <taxon>Eukaryota</taxon>
        <taxon>Fungi</taxon>
        <taxon>Dikarya</taxon>
        <taxon>Ascomycota</taxon>
        <taxon>Saccharomycotina</taxon>
        <taxon>Saccharomycetes</taxon>
        <taxon>Saccharomycetales</taxon>
        <taxon>Saccharomycetaceae</taxon>
        <taxon>Eremothecium</taxon>
    </lineage>
</organism>
<proteinExistence type="inferred from homology"/>
<reference key="1">
    <citation type="journal article" date="2004" name="Science">
        <title>The Ashbya gossypii genome as a tool for mapping the ancient Saccharomyces cerevisiae genome.</title>
        <authorList>
            <person name="Dietrich F.S."/>
            <person name="Voegeli S."/>
            <person name="Brachat S."/>
            <person name="Lerch A."/>
            <person name="Gates K."/>
            <person name="Steiner S."/>
            <person name="Mohr C."/>
            <person name="Poehlmann R."/>
            <person name="Luedi P."/>
            <person name="Choi S."/>
            <person name="Wing R.A."/>
            <person name="Flavier A."/>
            <person name="Gaffney T.D."/>
            <person name="Philippsen P."/>
        </authorList>
    </citation>
    <scope>NUCLEOTIDE SEQUENCE [LARGE SCALE GENOMIC DNA]</scope>
    <source>
        <strain>ATCC 10895 / CBS 109.51 / FGSC 9923 / NRRL Y-1056</strain>
    </source>
</reference>
<reference key="2">
    <citation type="journal article" date="2013" name="G3 (Bethesda)">
        <title>Genomes of Ashbya fungi isolated from insects reveal four mating-type loci, numerous translocations, lack of transposons, and distinct gene duplications.</title>
        <authorList>
            <person name="Dietrich F.S."/>
            <person name="Voegeli S."/>
            <person name="Kuo S."/>
            <person name="Philippsen P."/>
        </authorList>
    </citation>
    <scope>GENOME REANNOTATION</scope>
    <source>
        <strain>ATCC 10895 / CBS 109.51 / FGSC 9923 / NRRL Y-1056</strain>
    </source>
</reference>
<reference key="3">
    <citation type="submission" date="2001-05" db="EMBL/GenBank/DDBJ databases">
        <title>Isolation and functional analysis of centromeric DNA of the filamentous ascomycete Ashbya gossypii.</title>
        <authorList>
            <person name="Wendland J."/>
            <person name="Dietrich F.S."/>
            <person name="Mohr C."/>
            <person name="Philippsen P."/>
        </authorList>
    </citation>
    <scope>NUCLEOTIDE SEQUENCE [GENOMIC DNA] OF 246-738</scope>
    <source>
        <strain>ATCC 10895 / CBS 109.51 / FGSC 9923 / NRRL Y-1056</strain>
    </source>
</reference>
<sequence length="738" mass="84487">MLQGMPKRSGSISELHDPFSSPDVYYGPATDPRRQKQPNKYSRTRTMSIIENVSTFKSAGKQYNIRRRGSEDDSMLASSGHRKFYIKDVDKTLEELLESEDTDGNYQITIEDRGPKTLRVGTANSNGFRHVQIRGTYMLSNLLQELTIAKNFGRKQVILDEARLNEDPVNRLTRLITHQFWDSLTRRIDYNSIAAIAADTKVDTPGAKVPRIYVPHGCPEQYEYFIECSQLNPSLNLEVKYLPDVITPEHVQSLNESPGLLALAMESHRDPITGESTLVGFPYVVPGGRFNELYGWDSYLMALGLLDCNKVDIARGMVEHFIFEIEHYGKILNANRSYYLCRSQPPFLTDMALKVFEKFGGDQNPTAVDFLKRAFIAAIKEYKSVWMAEPRYDKTTGLSCYHPDGIGFPPETEPDHFDAICRKFAEKHNVTIPEFRCMYDAGEVHEPELDEFFLHDRAVRESGHDTSYRLENVCAYLATIDLNSLLYKYEKDIAYVVSKYFDDSITDYAGETTTSSHWEALADIRKQRITKYLWDEETGFFYDYNVHIGKRTSYDSATTFWAMWAGLATQEQANAMVEKALPRLEMLGGLVACTEESRGEITMNRPSRQWDYPYGWAPHQMLAWTGLDNYGFTGVARRLAYRWLFLMTKAFVDYNGIVVEKYDVTRGTDPHRVDAEYGNQGADFKGVATEGFGWVNSSYILGLKFMNTYAKRALANCTVPDIFFKHMKPEEKARYALI</sequence>
<feature type="chain" id="PRO_0000173799" description="Probable trehalase">
    <location>
        <begin position="1"/>
        <end position="738"/>
    </location>
</feature>
<feature type="region of interest" description="Disordered" evidence="2">
    <location>
        <begin position="1"/>
        <end position="44"/>
    </location>
</feature>
<feature type="active site" description="Proton donor/acceptor" evidence="1">
    <location>
        <position position="465"/>
    </location>
</feature>
<feature type="active site" description="Proton donor/acceptor" evidence="1">
    <location>
        <position position="660"/>
    </location>
</feature>
<feature type="binding site" evidence="1">
    <location>
        <position position="289"/>
    </location>
    <ligand>
        <name>substrate</name>
    </ligand>
</feature>
<feature type="binding site" evidence="1">
    <location>
        <begin position="296"/>
        <end position="297"/>
    </location>
    <ligand>
        <name>substrate</name>
    </ligand>
</feature>
<feature type="binding site" evidence="1">
    <location>
        <position position="333"/>
    </location>
    <ligand>
        <name>substrate</name>
    </ligand>
</feature>
<feature type="binding site" evidence="1">
    <location>
        <begin position="342"/>
        <end position="344"/>
    </location>
    <ligand>
        <name>substrate</name>
    </ligand>
</feature>
<feature type="binding site" evidence="1">
    <location>
        <position position="342"/>
    </location>
    <ligand>
        <name>substrate</name>
    </ligand>
</feature>
<feature type="binding site" evidence="1">
    <location>
        <position position="463"/>
    </location>
    <ligand>
        <name>substrate</name>
    </ligand>
</feature>
<protein>
    <recommendedName>
        <fullName>Probable trehalase</fullName>
        <ecNumber>3.2.1.28</ecNumber>
    </recommendedName>
    <alternativeName>
        <fullName>Alpha,alpha-trehalase</fullName>
    </alternativeName>
    <alternativeName>
        <fullName>Alpha,alpha-trehalose glucohydrolase</fullName>
    </alternativeName>
</protein>
<gene>
    <name type="primary">NTH2</name>
    <name type="ordered locus">AER001C</name>
</gene>
<name>TREB_EREGS</name>
<accession>Q757L1</accession>
<accession>Q8J1F6</accession>
<dbReference type="EC" id="3.2.1.28"/>
<dbReference type="EMBL" id="AE016818">
    <property type="protein sequence ID" value="AAS52685.1"/>
    <property type="molecule type" value="Genomic_DNA"/>
</dbReference>
<dbReference type="EMBL" id="AF384989">
    <property type="protein sequence ID" value="AAO15410.1"/>
    <property type="molecule type" value="Genomic_DNA"/>
</dbReference>
<dbReference type="RefSeq" id="NP_984861.1">
    <property type="nucleotide sequence ID" value="NM_210215.1"/>
</dbReference>
<dbReference type="SMR" id="Q757L1"/>
<dbReference type="FunCoup" id="Q757L1">
    <property type="interactions" value="346"/>
</dbReference>
<dbReference type="STRING" id="284811.Q757L1"/>
<dbReference type="CAZy" id="GH37">
    <property type="family name" value="Glycoside Hydrolase Family 37"/>
</dbReference>
<dbReference type="EnsemblFungi" id="AAS52685">
    <property type="protein sequence ID" value="AAS52685"/>
    <property type="gene ID" value="AGOS_AER001C"/>
</dbReference>
<dbReference type="GeneID" id="4621060"/>
<dbReference type="KEGG" id="ago:AGOS_AER001C"/>
<dbReference type="eggNOG" id="KOG0602">
    <property type="taxonomic scope" value="Eukaryota"/>
</dbReference>
<dbReference type="HOGENOM" id="CLU_006451_1_1_1"/>
<dbReference type="InParanoid" id="Q757L1"/>
<dbReference type="OMA" id="WLFMMTK"/>
<dbReference type="OrthoDB" id="3542292at2759"/>
<dbReference type="Proteomes" id="UP000000591">
    <property type="component" value="Chromosome V"/>
</dbReference>
<dbReference type="GO" id="GO:0005737">
    <property type="term" value="C:cytoplasm"/>
    <property type="evidence" value="ECO:0007669"/>
    <property type="project" value="InterPro"/>
</dbReference>
<dbReference type="GO" id="GO:0004555">
    <property type="term" value="F:alpha,alpha-trehalase activity"/>
    <property type="evidence" value="ECO:0000318"/>
    <property type="project" value="GO_Central"/>
</dbReference>
<dbReference type="GO" id="GO:0005509">
    <property type="term" value="F:calcium ion binding"/>
    <property type="evidence" value="ECO:0007669"/>
    <property type="project" value="InterPro"/>
</dbReference>
<dbReference type="GO" id="GO:0005993">
    <property type="term" value="P:trehalose catabolic process"/>
    <property type="evidence" value="ECO:0000318"/>
    <property type="project" value="GO_Central"/>
</dbReference>
<dbReference type="FunFam" id="1.50.10.10:FF:000026">
    <property type="entry name" value="Trehalase"/>
    <property type="match status" value="1"/>
</dbReference>
<dbReference type="Gene3D" id="1.50.10.10">
    <property type="match status" value="1"/>
</dbReference>
<dbReference type="InterPro" id="IPR008928">
    <property type="entry name" value="6-hairpin_glycosidase_sf"/>
</dbReference>
<dbReference type="InterPro" id="IPR012341">
    <property type="entry name" value="6hp_glycosidase-like_sf"/>
</dbReference>
<dbReference type="InterPro" id="IPR001661">
    <property type="entry name" value="Glyco_hydro_37"/>
</dbReference>
<dbReference type="InterPro" id="IPR018232">
    <property type="entry name" value="Glyco_hydro_37_CS"/>
</dbReference>
<dbReference type="InterPro" id="IPR011120">
    <property type="entry name" value="Trehalase_Ca-bd"/>
</dbReference>
<dbReference type="PANTHER" id="PTHR23403:SF6">
    <property type="entry name" value="CYTOSOLIC NEUTRAL TREHALASE-RELATED"/>
    <property type="match status" value="1"/>
</dbReference>
<dbReference type="PANTHER" id="PTHR23403">
    <property type="entry name" value="TREHALASE"/>
    <property type="match status" value="1"/>
</dbReference>
<dbReference type="Pfam" id="PF01204">
    <property type="entry name" value="Trehalase"/>
    <property type="match status" value="1"/>
</dbReference>
<dbReference type="Pfam" id="PF07492">
    <property type="entry name" value="Trehalase_Ca-bi"/>
    <property type="match status" value="1"/>
</dbReference>
<dbReference type="PRINTS" id="PR00744">
    <property type="entry name" value="GLHYDRLASE37"/>
</dbReference>
<dbReference type="SUPFAM" id="SSF48208">
    <property type="entry name" value="Six-hairpin glycosidases"/>
    <property type="match status" value="1"/>
</dbReference>
<dbReference type="PROSITE" id="PS00927">
    <property type="entry name" value="TREHALASE_1"/>
    <property type="match status" value="1"/>
</dbReference>
<dbReference type="PROSITE" id="PS00928">
    <property type="entry name" value="TREHALASE_2"/>
    <property type="match status" value="1"/>
</dbReference>
<evidence type="ECO:0000250" key="1"/>
<evidence type="ECO:0000256" key="2">
    <source>
        <dbReference type="SAM" id="MobiDB-lite"/>
    </source>
</evidence>
<evidence type="ECO:0000305" key="3"/>